<protein>
    <recommendedName>
        <fullName>2-hydroxy-6-oxo-6-phenylhexa-2,4-dienoate hydrolase</fullName>
        <shortName>HOPDA hydrolase</shortName>
        <ecNumber>3.7.1.8</ecNumber>
    </recommendedName>
    <alternativeName>
        <fullName>2,6-dioxo-6-phenylhexa-3-enoate hydrolase</fullName>
    </alternativeName>
</protein>
<gene>
    <name type="primary">bphD</name>
</gene>
<accession>Q52011</accession>
<name>BPHD_METFU</name>
<comment type="function">
    <text evidence="3">Catalyzes an unusual C-C bond hydrolysis of 2-hydroxy-6-oxo-6-phenylhexa-2,4-dienoic acid (HOPDA) to produce benzoic acid and 2-hydroxy-2,4-pentadienoic acid (HPD).</text>
</comment>
<comment type="catalytic activity">
    <reaction>
        <text>2,6-dioxo-6-phenylhexa-3-enoate + H2O = 2-oxopent-4-enoate + benzoate + H(+)</text>
        <dbReference type="Rhea" id="RHEA:17161"/>
        <dbReference type="ChEBI" id="CHEBI:11641"/>
        <dbReference type="ChEBI" id="CHEBI:15377"/>
        <dbReference type="ChEBI" id="CHEBI:15378"/>
        <dbReference type="ChEBI" id="CHEBI:16150"/>
        <dbReference type="ChEBI" id="CHEBI:64675"/>
        <dbReference type="EC" id="3.7.1.8"/>
    </reaction>
</comment>
<comment type="pathway">
    <text>Xenobiotic degradation; biphenyl degradation; 2-hydroxy-2,4-pentadienoate and benzoate from biphenyl: step 4/4.</text>
</comment>
<comment type="subunit">
    <text evidence="1">Homodimer.</text>
</comment>
<comment type="induction">
    <text evidence="3">By biphenyl.</text>
</comment>
<comment type="similarity">
    <text evidence="4">Belongs to the AB hydrolase superfamily. BphD family.</text>
</comment>
<evidence type="ECO:0000250" key="1"/>
<evidence type="ECO:0000255" key="2"/>
<evidence type="ECO:0000269" key="3">
    <source>
    </source>
</evidence>
<evidence type="ECO:0000305" key="4"/>
<proteinExistence type="evidence at transcript level"/>
<dbReference type="EC" id="3.7.1.8"/>
<dbReference type="EMBL" id="D85851">
    <property type="protein sequence ID" value="BAA12881.1"/>
    <property type="molecule type" value="Genomic_DNA"/>
</dbReference>
<dbReference type="SMR" id="Q52011"/>
<dbReference type="STRING" id="1149133.ppKF707_3395"/>
<dbReference type="ESTHER" id="pseps-bphd">
    <property type="family name" value="Carbon-carbon_bond_hydrolase"/>
</dbReference>
<dbReference type="MEROPS" id="S33.016"/>
<dbReference type="UniPathway" id="UPA00155">
    <property type="reaction ID" value="UER00253"/>
</dbReference>
<dbReference type="GO" id="GO:0016020">
    <property type="term" value="C:membrane"/>
    <property type="evidence" value="ECO:0007669"/>
    <property type="project" value="TreeGrafter"/>
</dbReference>
<dbReference type="GO" id="GO:0018774">
    <property type="term" value="F:2,6-dioxo-6-phenylhexa-3-enoate hydrolase activity"/>
    <property type="evidence" value="ECO:0007669"/>
    <property type="project" value="RHEA"/>
</dbReference>
<dbReference type="GO" id="GO:0018771">
    <property type="term" value="F:2-hydroxy-6-oxonona-2,4-dienedioate hydrolase activity"/>
    <property type="evidence" value="ECO:0007669"/>
    <property type="project" value="UniProtKB-UniRule"/>
</dbReference>
<dbReference type="GO" id="GO:0047372">
    <property type="term" value="F:monoacylglycerol lipase activity"/>
    <property type="evidence" value="ECO:0007669"/>
    <property type="project" value="TreeGrafter"/>
</dbReference>
<dbReference type="GO" id="GO:0046464">
    <property type="term" value="P:acylglycerol catabolic process"/>
    <property type="evidence" value="ECO:0007669"/>
    <property type="project" value="TreeGrafter"/>
</dbReference>
<dbReference type="GO" id="GO:0070980">
    <property type="term" value="P:biphenyl catabolic process"/>
    <property type="evidence" value="ECO:0007669"/>
    <property type="project" value="UniProtKB-UniRule"/>
</dbReference>
<dbReference type="Gene3D" id="3.40.50.1820">
    <property type="entry name" value="alpha/beta hydrolase"/>
    <property type="match status" value="1"/>
</dbReference>
<dbReference type="HAMAP" id="MF_01688">
    <property type="entry name" value="Biphenyl_BphD"/>
    <property type="match status" value="1"/>
</dbReference>
<dbReference type="InterPro" id="IPR000073">
    <property type="entry name" value="AB_hydrolase_1"/>
</dbReference>
<dbReference type="InterPro" id="IPR029058">
    <property type="entry name" value="AB_hydrolase_fold"/>
</dbReference>
<dbReference type="InterPro" id="IPR050266">
    <property type="entry name" value="AB_hydrolase_sf"/>
</dbReference>
<dbReference type="InterPro" id="IPR000639">
    <property type="entry name" value="Epox_hydrolase-like"/>
</dbReference>
<dbReference type="InterPro" id="IPR017727">
    <property type="entry name" value="HOPD_hydrolase_BphD"/>
</dbReference>
<dbReference type="NCBIfam" id="TIGR03343">
    <property type="entry name" value="biphenyl_bphD"/>
    <property type="match status" value="1"/>
</dbReference>
<dbReference type="PANTHER" id="PTHR43798">
    <property type="entry name" value="MONOACYLGLYCEROL LIPASE"/>
    <property type="match status" value="1"/>
</dbReference>
<dbReference type="PANTHER" id="PTHR43798:SF5">
    <property type="entry name" value="MONOACYLGLYCEROL LIPASE ABHD6"/>
    <property type="match status" value="1"/>
</dbReference>
<dbReference type="Pfam" id="PF00561">
    <property type="entry name" value="Abhydrolase_1"/>
    <property type="match status" value="1"/>
</dbReference>
<dbReference type="PRINTS" id="PR00111">
    <property type="entry name" value="ABHYDROLASE"/>
</dbReference>
<dbReference type="PRINTS" id="PR00412">
    <property type="entry name" value="EPOXHYDRLASE"/>
</dbReference>
<dbReference type="SUPFAM" id="SSF53474">
    <property type="entry name" value="alpha/beta-Hydrolases"/>
    <property type="match status" value="1"/>
</dbReference>
<reference key="1">
    <citation type="journal article" date="2000" name="J. Biol. Chem.">
        <title>Versatile transcription of biphenyl catabolic bph operon in Pseudomonas pseudoalcaligenes KF707.</title>
        <authorList>
            <person name="Watanabe T."/>
            <person name="Inoue R."/>
            <person name="Kimura N."/>
            <person name="Furukawa K."/>
        </authorList>
    </citation>
    <scope>NUCLEOTIDE SEQUENCE [GENOMIC DNA]</scope>
    <scope>FUNCTION</scope>
    <scope>INDUCTION</scope>
    <source>
        <strain>DSM 10086 / NBRC 110670 / KF707</strain>
    </source>
</reference>
<sequence>MTALTESSTSKFVKINEKGFSDFNIHYNEAGNGETVIMLHGGGPGAGGWSNYYRNVGPFVDAGYRVILKDSPGFNKSDAVVMDEQRGLVNARAVKGLMDALGIDRAHLVGNSMGGATALNFAIEYPERIGKLILMGPGGPGPSMFAPMPMEGIKLLFKLYAEPSYENLKQMIQVFLYDQSLITEELLQGRWEAIQRQPEHLKNFLISAQKAPLSTWDVTARLGEIKAKTFITWGRDDRFVPLDHGLKLLWNIDDARLHVFSKCGHWAQWEHADEFNRLAIDFLRQA</sequence>
<feature type="chain" id="PRO_0000373814" description="2-hydroxy-6-oxo-6-phenylhexa-2,4-dienoate hydrolase">
    <location>
        <begin position="1"/>
        <end position="286"/>
    </location>
</feature>
<feature type="domain" description="AB hydrolase-1" evidence="2">
    <location>
        <begin position="36"/>
        <end position="271"/>
    </location>
</feature>
<feature type="active site" description="Proton acceptor" evidence="1">
    <location>
        <position position="265"/>
    </location>
</feature>
<feature type="binding site" evidence="1">
    <location>
        <begin position="42"/>
        <end position="43"/>
    </location>
    <ligand>
        <name>substrate</name>
    </ligand>
</feature>
<feature type="binding site" evidence="1">
    <location>
        <position position="51"/>
    </location>
    <ligand>
        <name>substrate</name>
    </ligand>
</feature>
<feature type="binding site" evidence="1">
    <location>
        <position position="111"/>
    </location>
    <ligand>
        <name>substrate</name>
    </ligand>
</feature>
<feature type="binding site" evidence="1">
    <location>
        <position position="180"/>
    </location>
    <ligand>
        <name>substrate</name>
    </ligand>
</feature>
<feature type="binding site" evidence="1">
    <location>
        <position position="190"/>
    </location>
    <ligand>
        <name>substrate</name>
    </ligand>
</feature>
<feature type="binding site" evidence="1">
    <location>
        <position position="266"/>
    </location>
    <ligand>
        <name>substrate</name>
    </ligand>
</feature>
<feature type="site" description="Transition state stabilizer" evidence="1">
    <location>
        <position position="112"/>
    </location>
</feature>
<keyword id="KW-0058">Aromatic hydrocarbons catabolism</keyword>
<keyword id="KW-0378">Hydrolase</keyword>
<organism>
    <name type="scientific">Metapseudomonas furukawaii</name>
    <name type="common">Pseudomonas furukawaii</name>
    <dbReference type="NCBI Taxonomy" id="1149133"/>
    <lineage>
        <taxon>Bacteria</taxon>
        <taxon>Pseudomonadati</taxon>
        <taxon>Pseudomonadota</taxon>
        <taxon>Gammaproteobacteria</taxon>
        <taxon>Pseudomonadales</taxon>
        <taxon>Pseudomonadaceae</taxon>
        <taxon>Metapseudomonas</taxon>
    </lineage>
</organism>